<organism>
    <name type="scientific">Arabidopsis thaliana</name>
    <name type="common">Mouse-ear cress</name>
    <dbReference type="NCBI Taxonomy" id="3702"/>
    <lineage>
        <taxon>Eukaryota</taxon>
        <taxon>Viridiplantae</taxon>
        <taxon>Streptophyta</taxon>
        <taxon>Embryophyta</taxon>
        <taxon>Tracheophyta</taxon>
        <taxon>Spermatophyta</taxon>
        <taxon>Magnoliopsida</taxon>
        <taxon>eudicotyledons</taxon>
        <taxon>Gunneridae</taxon>
        <taxon>Pentapetalae</taxon>
        <taxon>rosids</taxon>
        <taxon>malvids</taxon>
        <taxon>Brassicales</taxon>
        <taxon>Brassicaceae</taxon>
        <taxon>Camelineae</taxon>
        <taxon>Arabidopsis</taxon>
    </lineage>
</organism>
<accession>Q9LQU7</accession>
<accession>Q944R5</accession>
<feature type="chain" id="PRO_0000409460" description="Microtubule-associated protein 70-4">
    <location>
        <begin position="1"/>
        <end position="604"/>
    </location>
</feature>
<feature type="region of interest" description="Disordered" evidence="3">
    <location>
        <begin position="1"/>
        <end position="33"/>
    </location>
</feature>
<feature type="region of interest" description="Required for targeting to microtubules" evidence="1">
    <location>
        <begin position="233"/>
        <end position="470"/>
    </location>
</feature>
<feature type="region of interest" description="Disordered" evidence="3">
    <location>
        <begin position="367"/>
        <end position="422"/>
    </location>
</feature>
<feature type="region of interest" description="Disordered" evidence="3">
    <location>
        <begin position="434"/>
        <end position="495"/>
    </location>
</feature>
<feature type="coiled-coil region" evidence="2">
    <location>
        <begin position="49"/>
        <end position="351"/>
    </location>
</feature>
<feature type="coiled-coil region" evidence="2">
    <location>
        <begin position="521"/>
        <end position="569"/>
    </location>
</feature>
<feature type="compositionally biased region" description="Low complexity" evidence="3">
    <location>
        <begin position="371"/>
        <end position="385"/>
    </location>
</feature>
<feature type="compositionally biased region" description="Polar residues" evidence="3">
    <location>
        <begin position="401"/>
        <end position="422"/>
    </location>
</feature>
<feature type="compositionally biased region" description="Polar residues" evidence="3">
    <location>
        <begin position="468"/>
        <end position="478"/>
    </location>
</feature>
<gene>
    <name type="primary">MAP70.4</name>
    <name type="ordered locus">At1g14840</name>
    <name type="ORF">F10B6.24</name>
</gene>
<comment type="function">
    <text evidence="1">Plant-specific protein that interact with microtubules.</text>
</comment>
<comment type="subcellular location">
    <subcellularLocation>
        <location evidence="1">Cytoplasm</location>
        <location evidence="1">Cytoskeleton</location>
    </subcellularLocation>
    <text>Associated to microtubules.</text>
</comment>
<comment type="alternative products">
    <event type="alternative splicing"/>
    <isoform>
        <id>Q9LQU7-1</id>
        <name>1</name>
        <sequence type="displayed"/>
    </isoform>
    <text>A number of isoforms are produced. According to EST sequences.</text>
</comment>
<comment type="similarity">
    <text evidence="4">Belongs to the MAP70 family.</text>
</comment>
<comment type="sequence caution" evidence="4">
    <conflict type="miscellaneous discrepancy">
        <sequence resource="EMBL-CDS" id="AAL11578"/>
    </conflict>
    <text>Sequencing errors.</text>
</comment>
<proteinExistence type="evidence at protein level"/>
<keyword id="KW-0025">Alternative splicing</keyword>
<keyword id="KW-0175">Coiled coil</keyword>
<keyword id="KW-0963">Cytoplasm</keyword>
<keyword id="KW-0206">Cytoskeleton</keyword>
<keyword id="KW-0493">Microtubule</keyword>
<keyword id="KW-1185">Reference proteome</keyword>
<sequence>MEERGFMSPSLAISASYREGGSKGMSRRRSMRPSFDADNEFMNLLHGSDPVRIELNRLENEVRDKDRELSEGQAEIKALRLSERQREKAVEELTEELGKMAEKLKLIENLLESKNLEIKKINEEKKASMAAQFAAEASLRRVHAAQKDDDMPPIEAILAPLEAELKLSRQEIAKLQDDNKSLDRLTKSKEAALLDAERTVQSALAKASMVDDLQNKNQELMKQIEICQEENRIIDKMHRQKVAEVEKLMQSVRELEEAVLAGGAAANAVRDYQRKFQEMNEERKILERELARAKVNANRVATVVANEWKDSNDKVMPVRQWLEERRFLQGEMQQLRDKLAIADRAAKSEAQLKEKFLLRLRVLEESLKGPTSSSSRGTSVGRSSSNGPTRRQSLGGAETSPKITSNGSLIKRTPSSQLRSLTASASTVLKHAKGTSRSFDGGTRSLDRSKVLINGPRSNFPLNHKSSEGTSRGESPSSIKGEEESADKATNNDSVPGVLYDLLQKEVITLRKAAHEKDQSLRDKDEAIEMLAKKVETLTKAMDVEAKKMRREVAVMGKEVAAMRVVDKGQQDSKTRRLSVSKGNTAQLLSGRVSGRIGMTRSTQ</sequence>
<name>MP704_ARATH</name>
<protein>
    <recommendedName>
        <fullName>Microtubule-associated protein 70-4</fullName>
        <shortName>AtMAP70-4</shortName>
    </recommendedName>
    <alternativeName>
        <fullName>70 kDa microtubule-associated protein 4</fullName>
    </alternativeName>
</protein>
<reference key="1">
    <citation type="journal article" date="2005" name="Plant J.">
        <title>Identification of a novel family of 70 kDa microtubule-associated proteins in Arabidopsis cells.</title>
        <authorList>
            <person name="Korolev A.V."/>
            <person name="Chan J."/>
            <person name="Naldrett M.J."/>
            <person name="Doonan J.H."/>
            <person name="Lloyd C.W."/>
        </authorList>
    </citation>
    <scope>NUCLEOTIDE SEQUENCE [MRNA]</scope>
    <scope>IDENTIFICATION BY MASS SPECTROMETRY</scope>
</reference>
<reference key="2">
    <citation type="journal article" date="2000" name="Nature">
        <title>Sequence and analysis of chromosome 1 of the plant Arabidopsis thaliana.</title>
        <authorList>
            <person name="Theologis A."/>
            <person name="Ecker J.R."/>
            <person name="Palm C.J."/>
            <person name="Federspiel N.A."/>
            <person name="Kaul S."/>
            <person name="White O."/>
            <person name="Alonso J."/>
            <person name="Altafi H."/>
            <person name="Araujo R."/>
            <person name="Bowman C.L."/>
            <person name="Brooks S.Y."/>
            <person name="Buehler E."/>
            <person name="Chan A."/>
            <person name="Chao Q."/>
            <person name="Chen H."/>
            <person name="Cheuk R.F."/>
            <person name="Chin C.W."/>
            <person name="Chung M.K."/>
            <person name="Conn L."/>
            <person name="Conway A.B."/>
            <person name="Conway A.R."/>
            <person name="Creasy T.H."/>
            <person name="Dewar K."/>
            <person name="Dunn P."/>
            <person name="Etgu P."/>
            <person name="Feldblyum T.V."/>
            <person name="Feng J.-D."/>
            <person name="Fong B."/>
            <person name="Fujii C.Y."/>
            <person name="Gill J.E."/>
            <person name="Goldsmith A.D."/>
            <person name="Haas B."/>
            <person name="Hansen N.F."/>
            <person name="Hughes B."/>
            <person name="Huizar L."/>
            <person name="Hunter J.L."/>
            <person name="Jenkins J."/>
            <person name="Johnson-Hopson C."/>
            <person name="Khan S."/>
            <person name="Khaykin E."/>
            <person name="Kim C.J."/>
            <person name="Koo H.L."/>
            <person name="Kremenetskaia I."/>
            <person name="Kurtz D.B."/>
            <person name="Kwan A."/>
            <person name="Lam B."/>
            <person name="Langin-Hooper S."/>
            <person name="Lee A."/>
            <person name="Lee J.M."/>
            <person name="Lenz C.A."/>
            <person name="Li J.H."/>
            <person name="Li Y.-P."/>
            <person name="Lin X."/>
            <person name="Liu S.X."/>
            <person name="Liu Z.A."/>
            <person name="Luros J.S."/>
            <person name="Maiti R."/>
            <person name="Marziali A."/>
            <person name="Militscher J."/>
            <person name="Miranda M."/>
            <person name="Nguyen M."/>
            <person name="Nierman W.C."/>
            <person name="Osborne B.I."/>
            <person name="Pai G."/>
            <person name="Peterson J."/>
            <person name="Pham P.K."/>
            <person name="Rizzo M."/>
            <person name="Rooney T."/>
            <person name="Rowley D."/>
            <person name="Sakano H."/>
            <person name="Salzberg S.L."/>
            <person name="Schwartz J.R."/>
            <person name="Shinn P."/>
            <person name="Southwick A.M."/>
            <person name="Sun H."/>
            <person name="Tallon L.J."/>
            <person name="Tambunga G."/>
            <person name="Toriumi M.J."/>
            <person name="Town C.D."/>
            <person name="Utterback T."/>
            <person name="Van Aken S."/>
            <person name="Vaysberg M."/>
            <person name="Vysotskaia V.S."/>
            <person name="Walker M."/>
            <person name="Wu D."/>
            <person name="Yu G."/>
            <person name="Fraser C.M."/>
            <person name="Venter J.C."/>
            <person name="Davis R.W."/>
        </authorList>
    </citation>
    <scope>NUCLEOTIDE SEQUENCE [LARGE SCALE GENOMIC DNA]</scope>
    <source>
        <strain>cv. Columbia</strain>
    </source>
</reference>
<reference key="3">
    <citation type="journal article" date="2017" name="Plant J.">
        <title>Araport11: a complete reannotation of the Arabidopsis thaliana reference genome.</title>
        <authorList>
            <person name="Cheng C.Y."/>
            <person name="Krishnakumar V."/>
            <person name="Chan A.P."/>
            <person name="Thibaud-Nissen F."/>
            <person name="Schobel S."/>
            <person name="Town C.D."/>
        </authorList>
    </citation>
    <scope>GENOME REANNOTATION</scope>
    <source>
        <strain>cv. Columbia</strain>
    </source>
</reference>
<reference key="4">
    <citation type="journal article" date="2003" name="Science">
        <title>Empirical analysis of transcriptional activity in the Arabidopsis genome.</title>
        <authorList>
            <person name="Yamada K."/>
            <person name="Lim J."/>
            <person name="Dale J.M."/>
            <person name="Chen H."/>
            <person name="Shinn P."/>
            <person name="Palm C.J."/>
            <person name="Southwick A.M."/>
            <person name="Wu H.C."/>
            <person name="Kim C.J."/>
            <person name="Nguyen M."/>
            <person name="Pham P.K."/>
            <person name="Cheuk R.F."/>
            <person name="Karlin-Newmann G."/>
            <person name="Liu S.X."/>
            <person name="Lam B."/>
            <person name="Sakano H."/>
            <person name="Wu T."/>
            <person name="Yu G."/>
            <person name="Miranda M."/>
            <person name="Quach H.L."/>
            <person name="Tripp M."/>
            <person name="Chang C.H."/>
            <person name="Lee J.M."/>
            <person name="Toriumi M.J."/>
            <person name="Chan M.M."/>
            <person name="Tang C.C."/>
            <person name="Onodera C.S."/>
            <person name="Deng J.M."/>
            <person name="Akiyama K."/>
            <person name="Ansari Y."/>
            <person name="Arakawa T."/>
            <person name="Banh J."/>
            <person name="Banno F."/>
            <person name="Bowser L."/>
            <person name="Brooks S.Y."/>
            <person name="Carninci P."/>
            <person name="Chao Q."/>
            <person name="Choy N."/>
            <person name="Enju A."/>
            <person name="Goldsmith A.D."/>
            <person name="Gurjal M."/>
            <person name="Hansen N.F."/>
            <person name="Hayashizaki Y."/>
            <person name="Johnson-Hopson C."/>
            <person name="Hsuan V.W."/>
            <person name="Iida K."/>
            <person name="Karnes M."/>
            <person name="Khan S."/>
            <person name="Koesema E."/>
            <person name="Ishida J."/>
            <person name="Jiang P.X."/>
            <person name="Jones T."/>
            <person name="Kawai J."/>
            <person name="Kamiya A."/>
            <person name="Meyers C."/>
            <person name="Nakajima M."/>
            <person name="Narusaka M."/>
            <person name="Seki M."/>
            <person name="Sakurai T."/>
            <person name="Satou M."/>
            <person name="Tamse R."/>
            <person name="Vaysberg M."/>
            <person name="Wallender E.K."/>
            <person name="Wong C."/>
            <person name="Yamamura Y."/>
            <person name="Yuan S."/>
            <person name="Shinozaki K."/>
            <person name="Davis R.W."/>
            <person name="Theologis A."/>
            <person name="Ecker J.R."/>
        </authorList>
    </citation>
    <scope>NUCLEOTIDE SEQUENCE [LARGE SCALE MRNA]</scope>
    <source>
        <strain>cv. Columbia</strain>
    </source>
</reference>
<dbReference type="EMBL" id="AM086441">
    <property type="protein sequence ID" value="CAJ31081.1"/>
    <property type="molecule type" value="mRNA"/>
</dbReference>
<dbReference type="EMBL" id="AC006917">
    <property type="protein sequence ID" value="AAF79237.1"/>
    <property type="molecule type" value="Genomic_DNA"/>
</dbReference>
<dbReference type="EMBL" id="CP002684">
    <property type="protein sequence ID" value="AEE29233.1"/>
    <property type="molecule type" value="Genomic_DNA"/>
</dbReference>
<dbReference type="EMBL" id="AF424584">
    <property type="protein sequence ID" value="AAL11578.1"/>
    <property type="status" value="ALT_SEQ"/>
    <property type="molecule type" value="mRNA"/>
</dbReference>
<dbReference type="EMBL" id="BT002258">
    <property type="protein sequence ID" value="AAN72269.1"/>
    <property type="molecule type" value="mRNA"/>
</dbReference>
<dbReference type="PIR" id="C86282">
    <property type="entry name" value="C86282"/>
</dbReference>
<dbReference type="RefSeq" id="NP_563959.1">
    <molecule id="Q9LQU7-1"/>
    <property type="nucleotide sequence ID" value="NM_101353.2"/>
</dbReference>
<dbReference type="SMR" id="Q9LQU7"/>
<dbReference type="FunCoup" id="Q9LQU7">
    <property type="interactions" value="305"/>
</dbReference>
<dbReference type="STRING" id="3702.Q9LQU7"/>
<dbReference type="GlyGen" id="Q9LQU7">
    <property type="glycosylation" value="1 site"/>
</dbReference>
<dbReference type="iPTMnet" id="Q9LQU7"/>
<dbReference type="PaxDb" id="3702-AT1G14840.1"/>
<dbReference type="EnsemblPlants" id="AT1G14840.1">
    <molecule id="Q9LQU7-1"/>
    <property type="protein sequence ID" value="AT1G14840.1"/>
    <property type="gene ID" value="AT1G14840"/>
</dbReference>
<dbReference type="GeneID" id="838049"/>
<dbReference type="Gramene" id="AT1G14840.1">
    <molecule id="Q9LQU7-1"/>
    <property type="protein sequence ID" value="AT1G14840.1"/>
    <property type="gene ID" value="AT1G14840"/>
</dbReference>
<dbReference type="KEGG" id="ath:AT1G14840"/>
<dbReference type="Araport" id="AT1G14840"/>
<dbReference type="TAIR" id="AT1G14840">
    <property type="gene designation" value="MAP70-4"/>
</dbReference>
<dbReference type="eggNOG" id="ENOG502QTPA">
    <property type="taxonomic scope" value="Eukaryota"/>
</dbReference>
<dbReference type="HOGENOM" id="CLU_023069_0_0_1"/>
<dbReference type="InParanoid" id="Q9LQU7"/>
<dbReference type="OMA" id="KFPSNHH"/>
<dbReference type="PhylomeDB" id="Q9LQU7"/>
<dbReference type="PRO" id="PR:Q9LQU7"/>
<dbReference type="Proteomes" id="UP000006548">
    <property type="component" value="Chromosome 1"/>
</dbReference>
<dbReference type="ExpressionAtlas" id="Q9LQU7">
    <property type="expression patterns" value="baseline and differential"/>
</dbReference>
<dbReference type="GO" id="GO:0005737">
    <property type="term" value="C:cytoplasm"/>
    <property type="evidence" value="ECO:0007669"/>
    <property type="project" value="UniProtKB-KW"/>
</dbReference>
<dbReference type="GO" id="GO:0005874">
    <property type="term" value="C:microtubule"/>
    <property type="evidence" value="ECO:0000250"/>
    <property type="project" value="TAIR"/>
</dbReference>
<dbReference type="GO" id="GO:0008017">
    <property type="term" value="F:microtubule binding"/>
    <property type="evidence" value="ECO:0000250"/>
    <property type="project" value="TAIR"/>
</dbReference>
<dbReference type="GO" id="GO:0007010">
    <property type="term" value="P:cytoskeleton organization"/>
    <property type="evidence" value="ECO:0000304"/>
    <property type="project" value="TAIR"/>
</dbReference>
<dbReference type="InterPro" id="IPR009768">
    <property type="entry name" value="MAP70"/>
</dbReference>
<dbReference type="PANTHER" id="PTHR31246">
    <property type="entry name" value="MICROTUBULE-ASSOCIATED PROTEIN 70-2"/>
    <property type="match status" value="1"/>
</dbReference>
<dbReference type="PANTHER" id="PTHR31246:SF13">
    <property type="entry name" value="MICROTUBULE-ASSOCIATED PROTEIN 70-4"/>
    <property type="match status" value="1"/>
</dbReference>
<dbReference type="Pfam" id="PF07058">
    <property type="entry name" value="MAP70"/>
    <property type="match status" value="1"/>
</dbReference>
<evidence type="ECO:0000250" key="1"/>
<evidence type="ECO:0000255" key="2"/>
<evidence type="ECO:0000256" key="3">
    <source>
        <dbReference type="SAM" id="MobiDB-lite"/>
    </source>
</evidence>
<evidence type="ECO:0000305" key="4"/>